<sequence length="373" mass="40736">MRIIVSGGGTGGHIYPALALVESLLKHEPDSKVLYIGSFRGLEGSIVPKTGLDFKQLHVQGFSRSLSLTNFKTVNLFIKAVKKSKHIIHDFKPDIVLGTGGYVSGAVLYAAQRLRIPTVINEQNSIAGVTNKFLSRGADRIAISFPHAANQFPKDKVVLTGNPRGQQVFEKKGDFSLTEFDLDPKLPTVLIFGGSGGALKLNSAVVNFANRFSEQKKFQAIFVTGRKYFDSVSNQLADLKINSSNFVVLPYLDNMDDVLPKIDLLISRSGATTLAEITALGIPSILIPSPNVTANHQEKNARQLEERGAAEVILESDLSSAMLYHDLSELLSHKSKLESMAQAAKKLGHPDAADKLYKLLVQVINERKQETTK</sequence>
<organism>
    <name type="scientific">Oenococcus oeni (strain ATCC BAA-331 / PSU-1)</name>
    <dbReference type="NCBI Taxonomy" id="203123"/>
    <lineage>
        <taxon>Bacteria</taxon>
        <taxon>Bacillati</taxon>
        <taxon>Bacillota</taxon>
        <taxon>Bacilli</taxon>
        <taxon>Lactobacillales</taxon>
        <taxon>Lactobacillaceae</taxon>
        <taxon>Oenococcus</taxon>
    </lineage>
</organism>
<gene>
    <name evidence="1" type="primary">murG</name>
    <name type="ordered locus">OEOE_1146</name>
</gene>
<evidence type="ECO:0000255" key="1">
    <source>
        <dbReference type="HAMAP-Rule" id="MF_00033"/>
    </source>
</evidence>
<dbReference type="EC" id="2.4.1.227" evidence="1"/>
<dbReference type="EMBL" id="CP000411">
    <property type="protein sequence ID" value="ABJ57042.1"/>
    <property type="molecule type" value="Genomic_DNA"/>
</dbReference>
<dbReference type="RefSeq" id="WP_011677631.1">
    <property type="nucleotide sequence ID" value="NC_008528.1"/>
</dbReference>
<dbReference type="SMR" id="Q04ET0"/>
<dbReference type="STRING" id="203123.OEOE_1146"/>
<dbReference type="CAZy" id="GT28">
    <property type="family name" value="Glycosyltransferase Family 28"/>
</dbReference>
<dbReference type="KEGG" id="ooe:OEOE_1146"/>
<dbReference type="PATRIC" id="fig|203123.7.peg.1171"/>
<dbReference type="eggNOG" id="COG0707">
    <property type="taxonomic scope" value="Bacteria"/>
</dbReference>
<dbReference type="HOGENOM" id="CLU_037404_0_1_9"/>
<dbReference type="UniPathway" id="UPA00219"/>
<dbReference type="Proteomes" id="UP000000774">
    <property type="component" value="Chromosome"/>
</dbReference>
<dbReference type="GO" id="GO:0005886">
    <property type="term" value="C:plasma membrane"/>
    <property type="evidence" value="ECO:0007669"/>
    <property type="project" value="UniProtKB-SubCell"/>
</dbReference>
<dbReference type="GO" id="GO:0050511">
    <property type="term" value="F:undecaprenyldiphospho-muramoylpentapeptide beta-N-acetylglucosaminyltransferase activity"/>
    <property type="evidence" value="ECO:0007669"/>
    <property type="project" value="UniProtKB-UniRule"/>
</dbReference>
<dbReference type="GO" id="GO:0005975">
    <property type="term" value="P:carbohydrate metabolic process"/>
    <property type="evidence" value="ECO:0007669"/>
    <property type="project" value="InterPro"/>
</dbReference>
<dbReference type="GO" id="GO:0051301">
    <property type="term" value="P:cell division"/>
    <property type="evidence" value="ECO:0007669"/>
    <property type="project" value="UniProtKB-KW"/>
</dbReference>
<dbReference type="GO" id="GO:0071555">
    <property type="term" value="P:cell wall organization"/>
    <property type="evidence" value="ECO:0007669"/>
    <property type="project" value="UniProtKB-KW"/>
</dbReference>
<dbReference type="GO" id="GO:0030259">
    <property type="term" value="P:lipid glycosylation"/>
    <property type="evidence" value="ECO:0007669"/>
    <property type="project" value="UniProtKB-UniRule"/>
</dbReference>
<dbReference type="GO" id="GO:0009252">
    <property type="term" value="P:peptidoglycan biosynthetic process"/>
    <property type="evidence" value="ECO:0007669"/>
    <property type="project" value="UniProtKB-UniRule"/>
</dbReference>
<dbReference type="GO" id="GO:0008360">
    <property type="term" value="P:regulation of cell shape"/>
    <property type="evidence" value="ECO:0007669"/>
    <property type="project" value="UniProtKB-KW"/>
</dbReference>
<dbReference type="CDD" id="cd03785">
    <property type="entry name" value="GT28_MurG"/>
    <property type="match status" value="1"/>
</dbReference>
<dbReference type="Gene3D" id="3.40.50.2000">
    <property type="entry name" value="Glycogen Phosphorylase B"/>
    <property type="match status" value="2"/>
</dbReference>
<dbReference type="HAMAP" id="MF_00033">
    <property type="entry name" value="MurG"/>
    <property type="match status" value="1"/>
</dbReference>
<dbReference type="InterPro" id="IPR006009">
    <property type="entry name" value="GlcNAc_MurG"/>
</dbReference>
<dbReference type="InterPro" id="IPR007235">
    <property type="entry name" value="Glyco_trans_28_C"/>
</dbReference>
<dbReference type="InterPro" id="IPR004276">
    <property type="entry name" value="GlycoTrans_28_N"/>
</dbReference>
<dbReference type="NCBIfam" id="TIGR01133">
    <property type="entry name" value="murG"/>
    <property type="match status" value="1"/>
</dbReference>
<dbReference type="PANTHER" id="PTHR21015:SF22">
    <property type="entry name" value="GLYCOSYLTRANSFERASE"/>
    <property type="match status" value="1"/>
</dbReference>
<dbReference type="PANTHER" id="PTHR21015">
    <property type="entry name" value="UDP-N-ACETYLGLUCOSAMINE--N-ACETYLMURAMYL-(PENTAPEPTIDE) PYROPHOSPHORYL-UNDECAPRENOL N-ACETYLGLUCOSAMINE TRANSFERASE 1"/>
    <property type="match status" value="1"/>
</dbReference>
<dbReference type="Pfam" id="PF04101">
    <property type="entry name" value="Glyco_tran_28_C"/>
    <property type="match status" value="1"/>
</dbReference>
<dbReference type="Pfam" id="PF03033">
    <property type="entry name" value="Glyco_transf_28"/>
    <property type="match status" value="1"/>
</dbReference>
<dbReference type="SUPFAM" id="SSF53756">
    <property type="entry name" value="UDP-Glycosyltransferase/glycogen phosphorylase"/>
    <property type="match status" value="1"/>
</dbReference>
<comment type="function">
    <text evidence="1">Cell wall formation. Catalyzes the transfer of a GlcNAc subunit on undecaprenyl-pyrophosphoryl-MurNAc-pentapeptide (lipid intermediate I) to form undecaprenyl-pyrophosphoryl-MurNAc-(pentapeptide)GlcNAc (lipid intermediate II).</text>
</comment>
<comment type="catalytic activity">
    <reaction evidence="1">
        <text>Mur2Ac(oyl-L-Ala-gamma-D-Glu-L-Lys-D-Ala-D-Ala)-di-trans,octa-cis-undecaprenyl diphosphate + UDP-N-acetyl-alpha-D-glucosamine = beta-D-GlcNAc-(1-&gt;4)-Mur2Ac(oyl-L-Ala-gamma-D-Glu-L-Lys-D-Ala-D-Ala)-di-trans,octa-cis-undecaprenyl diphosphate + UDP + H(+)</text>
        <dbReference type="Rhea" id="RHEA:23192"/>
        <dbReference type="ChEBI" id="CHEBI:15378"/>
        <dbReference type="ChEBI" id="CHEBI:57705"/>
        <dbReference type="ChEBI" id="CHEBI:58223"/>
        <dbReference type="ChEBI" id="CHEBI:60032"/>
        <dbReference type="ChEBI" id="CHEBI:60033"/>
        <dbReference type="EC" id="2.4.1.227"/>
    </reaction>
</comment>
<comment type="pathway">
    <text evidence="1">Cell wall biogenesis; peptidoglycan biosynthesis.</text>
</comment>
<comment type="subcellular location">
    <subcellularLocation>
        <location evidence="1">Cell membrane</location>
        <topology evidence="1">Peripheral membrane protein</topology>
        <orientation evidence="1">Cytoplasmic side</orientation>
    </subcellularLocation>
</comment>
<comment type="similarity">
    <text evidence="1">Belongs to the glycosyltransferase 28 family. MurG subfamily.</text>
</comment>
<proteinExistence type="inferred from homology"/>
<name>MURG_OENOB</name>
<accession>Q04ET0</accession>
<feature type="chain" id="PRO_1000002675" description="UDP-N-acetylglucosamine--N-acetylmuramyl-(pentapeptide) pyrophosphoryl-undecaprenol N-acetylglucosamine transferase">
    <location>
        <begin position="1"/>
        <end position="373"/>
    </location>
</feature>
<feature type="binding site" evidence="1">
    <location>
        <begin position="10"/>
        <end position="12"/>
    </location>
    <ligand>
        <name>UDP-N-acetyl-alpha-D-glucosamine</name>
        <dbReference type="ChEBI" id="CHEBI:57705"/>
    </ligand>
</feature>
<feature type="binding site" evidence="1">
    <location>
        <position position="124"/>
    </location>
    <ligand>
        <name>UDP-N-acetyl-alpha-D-glucosamine</name>
        <dbReference type="ChEBI" id="CHEBI:57705"/>
    </ligand>
</feature>
<feature type="binding site" evidence="1">
    <location>
        <position position="195"/>
    </location>
    <ligand>
        <name>UDP-N-acetyl-alpha-D-glucosamine</name>
        <dbReference type="ChEBI" id="CHEBI:57705"/>
    </ligand>
</feature>
<feature type="binding site" evidence="1">
    <location>
        <position position="297"/>
    </location>
    <ligand>
        <name>UDP-N-acetyl-alpha-D-glucosamine</name>
        <dbReference type="ChEBI" id="CHEBI:57705"/>
    </ligand>
</feature>
<reference key="1">
    <citation type="journal article" date="2006" name="Proc. Natl. Acad. Sci. U.S.A.">
        <title>Comparative genomics of the lactic acid bacteria.</title>
        <authorList>
            <person name="Makarova K.S."/>
            <person name="Slesarev A."/>
            <person name="Wolf Y.I."/>
            <person name="Sorokin A."/>
            <person name="Mirkin B."/>
            <person name="Koonin E.V."/>
            <person name="Pavlov A."/>
            <person name="Pavlova N."/>
            <person name="Karamychev V."/>
            <person name="Polouchine N."/>
            <person name="Shakhova V."/>
            <person name="Grigoriev I."/>
            <person name="Lou Y."/>
            <person name="Rohksar D."/>
            <person name="Lucas S."/>
            <person name="Huang K."/>
            <person name="Goodstein D.M."/>
            <person name="Hawkins T."/>
            <person name="Plengvidhya V."/>
            <person name="Welker D."/>
            <person name="Hughes J."/>
            <person name="Goh Y."/>
            <person name="Benson A."/>
            <person name="Baldwin K."/>
            <person name="Lee J.-H."/>
            <person name="Diaz-Muniz I."/>
            <person name="Dosti B."/>
            <person name="Smeianov V."/>
            <person name="Wechter W."/>
            <person name="Barabote R."/>
            <person name="Lorca G."/>
            <person name="Altermann E."/>
            <person name="Barrangou R."/>
            <person name="Ganesan B."/>
            <person name="Xie Y."/>
            <person name="Rawsthorne H."/>
            <person name="Tamir D."/>
            <person name="Parker C."/>
            <person name="Breidt F."/>
            <person name="Broadbent J.R."/>
            <person name="Hutkins R."/>
            <person name="O'Sullivan D."/>
            <person name="Steele J."/>
            <person name="Unlu G."/>
            <person name="Saier M.H. Jr."/>
            <person name="Klaenhammer T."/>
            <person name="Richardson P."/>
            <person name="Kozyavkin S."/>
            <person name="Weimer B.C."/>
            <person name="Mills D.A."/>
        </authorList>
    </citation>
    <scope>NUCLEOTIDE SEQUENCE [LARGE SCALE GENOMIC DNA]</scope>
    <source>
        <strain>ATCC BAA-331 / PSU-1</strain>
    </source>
</reference>
<keyword id="KW-0131">Cell cycle</keyword>
<keyword id="KW-0132">Cell division</keyword>
<keyword id="KW-1003">Cell membrane</keyword>
<keyword id="KW-0133">Cell shape</keyword>
<keyword id="KW-0961">Cell wall biogenesis/degradation</keyword>
<keyword id="KW-0328">Glycosyltransferase</keyword>
<keyword id="KW-0472">Membrane</keyword>
<keyword id="KW-0573">Peptidoglycan synthesis</keyword>
<keyword id="KW-1185">Reference proteome</keyword>
<keyword id="KW-0808">Transferase</keyword>
<protein>
    <recommendedName>
        <fullName evidence="1">UDP-N-acetylglucosamine--N-acetylmuramyl-(pentapeptide) pyrophosphoryl-undecaprenol N-acetylglucosamine transferase</fullName>
        <ecNumber evidence="1">2.4.1.227</ecNumber>
    </recommendedName>
    <alternativeName>
        <fullName evidence="1">Undecaprenyl-PP-MurNAc-pentapeptide-UDPGlcNAc GlcNAc transferase</fullName>
    </alternativeName>
</protein>